<gene>
    <name evidence="1" type="primary">murG</name>
    <name type="ordered locus">SAHV_1406</name>
</gene>
<dbReference type="EC" id="2.4.1.227" evidence="1"/>
<dbReference type="EMBL" id="AP009324">
    <property type="protein sequence ID" value="BAF78289.1"/>
    <property type="molecule type" value="Genomic_DNA"/>
</dbReference>
<dbReference type="RefSeq" id="WP_000160906.1">
    <property type="nucleotide sequence ID" value="NC_009782.1"/>
</dbReference>
<dbReference type="SMR" id="A7X2A2"/>
<dbReference type="CAZy" id="GT28">
    <property type="family name" value="Glycosyltransferase Family 28"/>
</dbReference>
<dbReference type="KEGG" id="saw:SAHV_1406"/>
<dbReference type="HOGENOM" id="CLU_037404_0_0_9"/>
<dbReference type="UniPathway" id="UPA00219"/>
<dbReference type="GO" id="GO:0005886">
    <property type="term" value="C:plasma membrane"/>
    <property type="evidence" value="ECO:0007669"/>
    <property type="project" value="UniProtKB-SubCell"/>
</dbReference>
<dbReference type="GO" id="GO:0050511">
    <property type="term" value="F:undecaprenyldiphospho-muramoylpentapeptide beta-N-acetylglucosaminyltransferase activity"/>
    <property type="evidence" value="ECO:0007669"/>
    <property type="project" value="UniProtKB-UniRule"/>
</dbReference>
<dbReference type="GO" id="GO:0005975">
    <property type="term" value="P:carbohydrate metabolic process"/>
    <property type="evidence" value="ECO:0007669"/>
    <property type="project" value="InterPro"/>
</dbReference>
<dbReference type="GO" id="GO:0051301">
    <property type="term" value="P:cell division"/>
    <property type="evidence" value="ECO:0007669"/>
    <property type="project" value="UniProtKB-KW"/>
</dbReference>
<dbReference type="GO" id="GO:0071555">
    <property type="term" value="P:cell wall organization"/>
    <property type="evidence" value="ECO:0007669"/>
    <property type="project" value="UniProtKB-KW"/>
</dbReference>
<dbReference type="GO" id="GO:0030259">
    <property type="term" value="P:lipid glycosylation"/>
    <property type="evidence" value="ECO:0007669"/>
    <property type="project" value="UniProtKB-UniRule"/>
</dbReference>
<dbReference type="GO" id="GO:0009252">
    <property type="term" value="P:peptidoglycan biosynthetic process"/>
    <property type="evidence" value="ECO:0007669"/>
    <property type="project" value="UniProtKB-UniRule"/>
</dbReference>
<dbReference type="GO" id="GO:0008360">
    <property type="term" value="P:regulation of cell shape"/>
    <property type="evidence" value="ECO:0007669"/>
    <property type="project" value="UniProtKB-KW"/>
</dbReference>
<dbReference type="CDD" id="cd03785">
    <property type="entry name" value="GT28_MurG"/>
    <property type="match status" value="1"/>
</dbReference>
<dbReference type="Gene3D" id="3.40.50.2000">
    <property type="entry name" value="Glycogen Phosphorylase B"/>
    <property type="match status" value="2"/>
</dbReference>
<dbReference type="HAMAP" id="MF_00033">
    <property type="entry name" value="MurG"/>
    <property type="match status" value="1"/>
</dbReference>
<dbReference type="InterPro" id="IPR006009">
    <property type="entry name" value="GlcNAc_MurG"/>
</dbReference>
<dbReference type="InterPro" id="IPR007235">
    <property type="entry name" value="Glyco_trans_28_C"/>
</dbReference>
<dbReference type="InterPro" id="IPR004276">
    <property type="entry name" value="GlycoTrans_28_N"/>
</dbReference>
<dbReference type="NCBIfam" id="NF009102">
    <property type="entry name" value="PRK12446.1"/>
    <property type="match status" value="1"/>
</dbReference>
<dbReference type="PANTHER" id="PTHR21015:SF27">
    <property type="entry name" value="UDP-N-ACETYLGLUCOSAMINE--N-ACETYLMURAMYL-(PENTAPEPTIDE) PYROPHOSPHORYL-UNDECAPRENOL N-ACETYLGLUCOSAMINE TRANSFERASE"/>
    <property type="match status" value="1"/>
</dbReference>
<dbReference type="PANTHER" id="PTHR21015">
    <property type="entry name" value="UDP-N-ACETYLGLUCOSAMINE--N-ACETYLMURAMYL-(PENTAPEPTIDE) PYROPHOSPHORYL-UNDECAPRENOL N-ACETYLGLUCOSAMINE TRANSFERASE 1"/>
    <property type="match status" value="1"/>
</dbReference>
<dbReference type="Pfam" id="PF04101">
    <property type="entry name" value="Glyco_tran_28_C"/>
    <property type="match status" value="1"/>
</dbReference>
<dbReference type="Pfam" id="PF03033">
    <property type="entry name" value="Glyco_transf_28"/>
    <property type="match status" value="1"/>
</dbReference>
<dbReference type="SUPFAM" id="SSF53756">
    <property type="entry name" value="UDP-Glycosyltransferase/glycogen phosphorylase"/>
    <property type="match status" value="1"/>
</dbReference>
<keyword id="KW-0131">Cell cycle</keyword>
<keyword id="KW-0132">Cell division</keyword>
<keyword id="KW-1003">Cell membrane</keyword>
<keyword id="KW-0133">Cell shape</keyword>
<keyword id="KW-0961">Cell wall biogenesis/degradation</keyword>
<keyword id="KW-0328">Glycosyltransferase</keyword>
<keyword id="KW-0472">Membrane</keyword>
<keyword id="KW-0573">Peptidoglycan synthesis</keyword>
<keyword id="KW-0808">Transferase</keyword>
<feature type="chain" id="PRO_0000315173" description="UDP-N-acetylglucosamine--N-acetylmuramyl-(pentapeptide) pyrophosphoryl-undecaprenol N-acetylglucosamine transferase">
    <location>
        <begin position="1"/>
        <end position="356"/>
    </location>
</feature>
<feature type="binding site" evidence="1">
    <location>
        <position position="166"/>
    </location>
    <ligand>
        <name>UDP-N-acetyl-alpha-D-glucosamine</name>
        <dbReference type="ChEBI" id="CHEBI:57705"/>
    </ligand>
</feature>
<feature type="binding site" evidence="1">
    <location>
        <position position="196"/>
    </location>
    <ligand>
        <name>UDP-N-acetyl-alpha-D-glucosamine</name>
        <dbReference type="ChEBI" id="CHEBI:57705"/>
    </ligand>
</feature>
<feature type="binding site" evidence="1">
    <location>
        <position position="290"/>
    </location>
    <ligand>
        <name>UDP-N-acetyl-alpha-D-glucosamine</name>
        <dbReference type="ChEBI" id="CHEBI:57705"/>
    </ligand>
</feature>
<name>MURG_STAA1</name>
<reference key="1">
    <citation type="journal article" date="2008" name="Antimicrob. Agents Chemother.">
        <title>Mutated response regulator graR is responsible for phenotypic conversion of Staphylococcus aureus from heterogeneous vancomycin-intermediate resistance to vancomycin-intermediate resistance.</title>
        <authorList>
            <person name="Neoh H.-M."/>
            <person name="Cui L."/>
            <person name="Yuzawa H."/>
            <person name="Takeuchi F."/>
            <person name="Matsuo M."/>
            <person name="Hiramatsu K."/>
        </authorList>
    </citation>
    <scope>NUCLEOTIDE SEQUENCE [LARGE SCALE GENOMIC DNA]</scope>
    <source>
        <strain>Mu3 / ATCC 700698</strain>
    </source>
</reference>
<proteinExistence type="inferred from homology"/>
<comment type="function">
    <text evidence="1">Cell wall formation. Catalyzes the transfer of a GlcNAc subunit on undecaprenyl-pyrophosphoryl-MurNAc-pentapeptide (lipid intermediate I) to form undecaprenyl-pyrophosphoryl-MurNAc-(pentapeptide)GlcNAc (lipid intermediate II).</text>
</comment>
<comment type="catalytic activity">
    <reaction evidence="1">
        <text>Mur2Ac(oyl-L-Ala-gamma-D-Glu-L-Lys-D-Ala-D-Ala)-di-trans,octa-cis-undecaprenyl diphosphate + UDP-N-acetyl-alpha-D-glucosamine = beta-D-GlcNAc-(1-&gt;4)-Mur2Ac(oyl-L-Ala-gamma-D-Glu-L-Lys-D-Ala-D-Ala)-di-trans,octa-cis-undecaprenyl diphosphate + UDP + H(+)</text>
        <dbReference type="Rhea" id="RHEA:23192"/>
        <dbReference type="ChEBI" id="CHEBI:15378"/>
        <dbReference type="ChEBI" id="CHEBI:57705"/>
        <dbReference type="ChEBI" id="CHEBI:58223"/>
        <dbReference type="ChEBI" id="CHEBI:60032"/>
        <dbReference type="ChEBI" id="CHEBI:60033"/>
        <dbReference type="EC" id="2.4.1.227"/>
    </reaction>
</comment>
<comment type="pathway">
    <text evidence="1">Cell wall biogenesis; peptidoglycan biosynthesis.</text>
</comment>
<comment type="subcellular location">
    <subcellularLocation>
        <location evidence="1">Cell membrane</location>
        <topology evidence="1">Peripheral membrane protein</topology>
        <orientation evidence="1">Cytoplasmic side</orientation>
    </subcellularLocation>
</comment>
<comment type="similarity">
    <text evidence="1">Belongs to the glycosyltransferase 28 family. MurG subfamily.</text>
</comment>
<organism>
    <name type="scientific">Staphylococcus aureus (strain Mu3 / ATCC 700698)</name>
    <dbReference type="NCBI Taxonomy" id="418127"/>
    <lineage>
        <taxon>Bacteria</taxon>
        <taxon>Bacillati</taxon>
        <taxon>Bacillota</taxon>
        <taxon>Bacilli</taxon>
        <taxon>Bacillales</taxon>
        <taxon>Staphylococcaceae</taxon>
        <taxon>Staphylococcus</taxon>
    </lineage>
</organism>
<accession>A7X2A2</accession>
<sequence length="356" mass="39727">MTKIAFTGGGTVGHVSVNLSLIPTALSQGYEALYIGSKNGIEREMIESQLPEIKYYPISSGKLRRYISLENAKDVFKVLKGILDARKVLKKEKPDLLFSKGGFVSVPVVIAAKSLNIPTIIHESDLTPGLANKIALKFAKKIYTTFEETLNYLPKEKADFIGATIREDLKNGNAHNGYQLTGFNENKKVLLVMGGSLGSKKLNSIIRENLDALLQQYQVIHLTGKGLKDAQVKKSGYIQYEFVKEDLTDLLAITDTVISRAGSNAIYEFLTLRIPMLLVPLGLDQSRGDQIDNANHFADKGYAKTIDEEQLTAQILLQELNEMEQERTRIINNMKSYEQSYTKEALFDKMIKDALN</sequence>
<protein>
    <recommendedName>
        <fullName evidence="1">UDP-N-acetylglucosamine--N-acetylmuramyl-(pentapeptide) pyrophosphoryl-undecaprenol N-acetylglucosamine transferase</fullName>
        <ecNumber evidence="1">2.4.1.227</ecNumber>
    </recommendedName>
    <alternativeName>
        <fullName evidence="1">Undecaprenyl-PP-MurNAc-pentapeptide-UDPGlcNAc GlcNAc transferase</fullName>
    </alternativeName>
</protein>
<evidence type="ECO:0000255" key="1">
    <source>
        <dbReference type="HAMAP-Rule" id="MF_00033"/>
    </source>
</evidence>